<comment type="function">
    <text evidence="1">A scaffold protein that connects plasma membrane proteins and regulatory components, regulating their surface expression in epithelial cells apical domains. May be involved in the coordination of a diverse range of regulatory processes for ion transport and second messenger cascades. In complex with NHERF1, may cluster proteins that are functionally dependent in a mutual fashion and modulate the trafficking and the activity of the associated membrane proteins. May play a role in the cellular mechanisms associated with multidrug resistance through its interaction with ABCC2 and PDZK1IP1. May potentiate the CFTR chloride channel activity. Required for normal cell-surface expression of SCARB1. Plays a role in maintaining normal plasma cholesterol levels via its effects on SCARB1. Plays a role in the normal localization and function of the chloride-anion exchanger SLC26A6 to the plasma membrane in the brush border of the proximal tubule of the kidney. May be involved in the regulation of proximal tubular Na(+)-dependent inorganic phosphate cotransport therefore playing an important role in tubule function (By similarity).</text>
</comment>
<comment type="subunit">
    <text evidence="2 3">Interacts with PDZK1IP1 and ABCC2. Binds to the C-terminal region of SLC26A3. Interacts (via PDZ domains 1 and 3) with SCARB1 (C-terminal domain). Forms a heterodimeric complex with NHERF1. Interacts with AKAP2, BCR, CFTR, SLCO1A1, SLC22A12, SLC22A4, SLC22A5, NHERF2 and SLC17A1. Component of a complex, composed of PDZK1, SYNGAP1, KLHL17 and NMDA receptors. Interacts (via PDZ1 domain) directly with KLHL17; the interaction is important for integrity of actin cytoskeleton structures in neurons. Interacts (via C-terminal PDZ domain) with SLC26A6 (via C-terminal domain). Interacts (via C-terminal PDZ domain) with SLC9A3 (via C-terminal domain). Interacts (via the first PDZ domain) with PTGIR (via non-isoprenylated C-terminus) (By similarity). Interacts (via PDZ domains 1 and 3) with SLC5A8 (via PDZ-binding motif); interaction increases nicotinate transport activity of SLC5A8 (By similarity).</text>
</comment>
<comment type="subcellular location">
    <subcellularLocation>
        <location evidence="4">Membrane</location>
        <topology evidence="4">Peripheral membrane protein</topology>
    </subcellularLocation>
    <subcellularLocation>
        <location evidence="3">Cell membrane</location>
    </subcellularLocation>
    <text evidence="4">Associated with peripheral membranes. Localizes to the apical compartment of proximal tubular cells and to sinusoidal liver membranes.</text>
</comment>
<comment type="domain">
    <text evidence="1">The PDZ 2 and 3 domains seem to be involved in the interaction with SLC26A3.</text>
</comment>
<comment type="domain">
    <text evidence="1">Interaction with the C-terminus of CFTR could be mediated through independent binding of PDZ 1, 3 and 4 domains.</text>
</comment>
<comment type="domain">
    <text evidence="1">The PDZ 1 and 3 domains seem to be involved in the interaction with SLCO1A1.</text>
</comment>
<comment type="domain">
    <text evidence="1">The PDZ 1 domain interacts with BCR.</text>
</comment>
<comment type="domain">
    <text evidence="1">The PDZ 2 and 4 domains do not interact with the C-terminal region of SCARB1.</text>
</comment>
<comment type="similarity">
    <text evidence="7">Belongs to the NHER family.</text>
</comment>
<proteinExistence type="evidence at transcript level"/>
<name>NHRF3_PONAB</name>
<accession>Q5RCF7</accession>
<accession>Q5R7M6</accession>
<accession>Q5RF44</accession>
<feature type="chain" id="PRO_0000058289" description="Na(+)/H(+) exchange regulatory cofactor NHE-RF3">
    <location>
        <begin position="1"/>
        <end position="519"/>
    </location>
</feature>
<feature type="domain" description="PDZ 1" evidence="5">
    <location>
        <begin position="9"/>
        <end position="90"/>
    </location>
</feature>
<feature type="domain" description="PDZ 2" evidence="5">
    <location>
        <begin position="134"/>
        <end position="215"/>
    </location>
</feature>
<feature type="domain" description="PDZ 3" evidence="5">
    <location>
        <begin position="243"/>
        <end position="323"/>
    </location>
</feature>
<feature type="domain" description="PDZ 4" evidence="5">
    <location>
        <begin position="378"/>
        <end position="458"/>
    </location>
</feature>
<feature type="region of interest" description="Disordered" evidence="6">
    <location>
        <begin position="347"/>
        <end position="374"/>
    </location>
</feature>
<feature type="region of interest" description="Disordered" evidence="6">
    <location>
        <begin position="473"/>
        <end position="519"/>
    </location>
</feature>
<feature type="compositionally biased region" description="Polar residues" evidence="6">
    <location>
        <begin position="357"/>
        <end position="367"/>
    </location>
</feature>
<feature type="compositionally biased region" description="Basic and acidic residues" evidence="6">
    <location>
        <begin position="482"/>
        <end position="504"/>
    </location>
</feature>
<feature type="compositionally biased region" description="Low complexity" evidence="6">
    <location>
        <begin position="505"/>
        <end position="519"/>
    </location>
</feature>
<feature type="modified residue" description="Phosphoserine" evidence="2">
    <location>
        <position position="148"/>
    </location>
</feature>
<feature type="modified residue" description="Phosphoserine" evidence="3">
    <location>
        <position position="192"/>
    </location>
</feature>
<feature type="modified residue" description="Phosphoserine" evidence="3">
    <location>
        <position position="250"/>
    </location>
</feature>
<feature type="modified residue" description="Phosphoserine" evidence="3">
    <location>
        <position position="334"/>
    </location>
</feature>
<feature type="modified residue" description="Phosphoserine" evidence="3">
    <location>
        <position position="348"/>
    </location>
</feature>
<feature type="modified residue" description="Phosphothreonine" evidence="3">
    <location>
        <position position="451"/>
    </location>
</feature>
<feature type="modified residue" description="Phosphoserine" evidence="3">
    <location>
        <position position="492"/>
    </location>
</feature>
<feature type="modified residue" description="Phosphoserine" evidence="3">
    <location>
        <position position="508"/>
    </location>
</feature>
<feature type="modified residue" description="Phosphoserine" evidence="3">
    <location>
        <position position="510"/>
    </location>
</feature>
<feature type="modified residue" description="Phosphoserine" evidence="3">
    <location>
        <position position="511"/>
    </location>
</feature>
<feature type="modified residue" description="Phosphoserine" evidence="3">
    <location>
        <position position="512"/>
    </location>
</feature>
<feature type="modified residue" description="Phosphoserine" evidence="3">
    <location>
        <position position="514"/>
    </location>
</feature>
<feature type="sequence conflict" description="In Ref. 1; CAH92234." evidence="7" ref="1">
    <original>D</original>
    <variation>V</variation>
    <location>
        <position position="101"/>
    </location>
</feature>
<feature type="sequence conflict" description="In Ref. 1; CAH90550." evidence="7" ref="1">
    <original>D</original>
    <variation>G</variation>
    <location>
        <position position="213"/>
    </location>
</feature>
<feature type="sequence conflict" description="In Ref. 1; CAH90550." evidence="7" ref="1">
    <original>H</original>
    <variation>P</variation>
    <location>
        <position position="494"/>
    </location>
</feature>
<protein>
    <recommendedName>
        <fullName>Na(+)/H(+) exchange regulatory cofactor NHE-RF3</fullName>
        <shortName>NHERF-3</shortName>
    </recommendedName>
    <alternativeName>
        <fullName>Na(+)/H(+) exchanger regulatory factor 3</fullName>
    </alternativeName>
    <alternativeName>
        <fullName>PDZ domain-containing protein 1</fullName>
    </alternativeName>
    <alternativeName>
        <fullName>Sodium-hydrogen exchanger regulatory factor 3</fullName>
    </alternativeName>
</protein>
<dbReference type="EMBL" id="CR857317">
    <property type="protein sequence ID" value="CAH89613.1"/>
    <property type="molecule type" value="mRNA"/>
</dbReference>
<dbReference type="EMBL" id="CR858313">
    <property type="protein sequence ID" value="CAH90550.1"/>
    <property type="molecule type" value="mRNA"/>
</dbReference>
<dbReference type="EMBL" id="CR860088">
    <property type="protein sequence ID" value="CAH92234.1"/>
    <property type="molecule type" value="mRNA"/>
</dbReference>
<dbReference type="RefSeq" id="NP_001126306.1">
    <property type="nucleotide sequence ID" value="NM_001132834.1"/>
</dbReference>
<dbReference type="RefSeq" id="NP_001128743.1">
    <property type="nucleotide sequence ID" value="NM_001135271.1"/>
</dbReference>
<dbReference type="SMR" id="Q5RCF7"/>
<dbReference type="FunCoup" id="Q5RCF7">
    <property type="interactions" value="142"/>
</dbReference>
<dbReference type="STRING" id="9601.ENSPPYP00000001092"/>
<dbReference type="GeneID" id="100173285"/>
<dbReference type="KEGG" id="pon:100173285"/>
<dbReference type="CTD" id="5174"/>
<dbReference type="eggNOG" id="KOG3528">
    <property type="taxonomic scope" value="Eukaryota"/>
</dbReference>
<dbReference type="InParanoid" id="Q5RCF7"/>
<dbReference type="OrthoDB" id="10009200at2759"/>
<dbReference type="Proteomes" id="UP000001595">
    <property type="component" value="Unplaced"/>
</dbReference>
<dbReference type="GO" id="GO:0016324">
    <property type="term" value="C:apical plasma membrane"/>
    <property type="evidence" value="ECO:0007669"/>
    <property type="project" value="TreeGrafter"/>
</dbReference>
<dbReference type="GO" id="GO:0031526">
    <property type="term" value="C:brush border membrane"/>
    <property type="evidence" value="ECO:0000250"/>
    <property type="project" value="UniProtKB"/>
</dbReference>
<dbReference type="GO" id="GO:0005886">
    <property type="term" value="C:plasma membrane"/>
    <property type="evidence" value="ECO:0000250"/>
    <property type="project" value="UniProtKB"/>
</dbReference>
<dbReference type="GO" id="GO:0043495">
    <property type="term" value="F:protein-membrane adaptor activity"/>
    <property type="evidence" value="ECO:0007669"/>
    <property type="project" value="TreeGrafter"/>
</dbReference>
<dbReference type="GO" id="GO:0005102">
    <property type="term" value="F:signaling receptor binding"/>
    <property type="evidence" value="ECO:0007669"/>
    <property type="project" value="TreeGrafter"/>
</dbReference>
<dbReference type="GO" id="GO:0090314">
    <property type="term" value="P:positive regulation of protein targeting to membrane"/>
    <property type="evidence" value="ECO:0000250"/>
    <property type="project" value="UniProtKB"/>
</dbReference>
<dbReference type="GO" id="GO:0072659">
    <property type="term" value="P:protein localization to plasma membrane"/>
    <property type="evidence" value="ECO:0007669"/>
    <property type="project" value="TreeGrafter"/>
</dbReference>
<dbReference type="GO" id="GO:0044070">
    <property type="term" value="P:regulation of monoatomic anion transport"/>
    <property type="evidence" value="ECO:0000250"/>
    <property type="project" value="UniProtKB"/>
</dbReference>
<dbReference type="CDD" id="cd06768">
    <property type="entry name" value="PDZ_NHERF-like"/>
    <property type="match status" value="4"/>
</dbReference>
<dbReference type="FunFam" id="2.30.42.10:FF:000187">
    <property type="entry name" value="Na(+)/H(+) exchange regulatory cofactor NHE-RF3"/>
    <property type="match status" value="1"/>
</dbReference>
<dbReference type="FunFam" id="2.30.42.10:FF:000211">
    <property type="entry name" value="Na(+)/H(+) exchange regulatory cofactor NHE-RF3"/>
    <property type="match status" value="1"/>
</dbReference>
<dbReference type="FunFam" id="2.30.42.10:FF:000166">
    <property type="entry name" value="Na(+)/H(+) exchange regulatory cofactor NHE-RF3 isoform X1"/>
    <property type="match status" value="1"/>
</dbReference>
<dbReference type="FunFam" id="2.30.42.10:FF:000123">
    <property type="entry name" value="Na(+)/H(+) exchange regulatory cofactor NHE-RF4"/>
    <property type="match status" value="1"/>
</dbReference>
<dbReference type="Gene3D" id="2.30.42.10">
    <property type="match status" value="4"/>
</dbReference>
<dbReference type="InterPro" id="IPR051067">
    <property type="entry name" value="NHER"/>
</dbReference>
<dbReference type="InterPro" id="IPR001478">
    <property type="entry name" value="PDZ"/>
</dbReference>
<dbReference type="InterPro" id="IPR036034">
    <property type="entry name" value="PDZ_sf"/>
</dbReference>
<dbReference type="PANTHER" id="PTHR14191:SF6">
    <property type="entry name" value="NA(+)_H(+) EXCHANGE REGULATORY COFACTOR NHE-RF3-RELATED"/>
    <property type="match status" value="1"/>
</dbReference>
<dbReference type="PANTHER" id="PTHR14191">
    <property type="entry name" value="PDZ DOMAIN CONTAINING PROTEIN"/>
    <property type="match status" value="1"/>
</dbReference>
<dbReference type="Pfam" id="PF00595">
    <property type="entry name" value="PDZ"/>
    <property type="match status" value="4"/>
</dbReference>
<dbReference type="SMART" id="SM00228">
    <property type="entry name" value="PDZ"/>
    <property type="match status" value="4"/>
</dbReference>
<dbReference type="SUPFAM" id="SSF50156">
    <property type="entry name" value="PDZ domain-like"/>
    <property type="match status" value="4"/>
</dbReference>
<dbReference type="PROSITE" id="PS50106">
    <property type="entry name" value="PDZ"/>
    <property type="match status" value="4"/>
</dbReference>
<evidence type="ECO:0000250" key="1"/>
<evidence type="ECO:0000250" key="2">
    <source>
        <dbReference type="UniProtKB" id="Q5T2W1"/>
    </source>
</evidence>
<evidence type="ECO:0000250" key="3">
    <source>
        <dbReference type="UniProtKB" id="Q9JIL4"/>
    </source>
</evidence>
<evidence type="ECO:0000250" key="4">
    <source>
        <dbReference type="UniProtKB" id="Q9JJ40"/>
    </source>
</evidence>
<evidence type="ECO:0000255" key="5">
    <source>
        <dbReference type="PROSITE-ProRule" id="PRU00143"/>
    </source>
</evidence>
<evidence type="ECO:0000256" key="6">
    <source>
        <dbReference type="SAM" id="MobiDB-lite"/>
    </source>
</evidence>
<evidence type="ECO:0000305" key="7"/>
<sequence>MTSTFNPRECKLSKQEGQNYGFFLRIEKDTEGHLVRVVEKGSPAEKAGLQDGDRVLRINDVFVDKEEHMQVVDLVRKSGNSVTLLVLDGDSYEKAVKTRVDLKELGQRQKEQGLSDNTLSPVMNGGVQTWTQPRLCYLVKEGGSYGFSLKTVQGKKGVYMTDITPQGVAMKAGVLADDHLIEVNGENVEDASHEQVVEKVKKSGSRVMFLLVDKETDKHHVEQKIQFKRETASLKLLPHQPRIVEMKKGSNGYGFYLRAGSEQKGQIIKDIDSGSPAEEAGLKNNDLVVAVNGESVETLDHDSVVEMIRKGGDQTSLLVVDKETDNMYRLAHFSPFLYYQSQELPNGSVKEAPAPTPTSLEVSSPPDTTEEVDHKPKLCRLAKGENGYGFHLNAIRGLPGSFIKEVQKGGPADLAGLEDEDVIIEVNGVNVLDEPYEKVVDRIQSSGKNVTLLVCGKKAYDYFQAKKIPIVSSLADPPDTPPDSKEGIVVESKHDSHMAKERAHSTASHSSSNSEDTEM</sequence>
<organism>
    <name type="scientific">Pongo abelii</name>
    <name type="common">Sumatran orangutan</name>
    <name type="synonym">Pongo pygmaeus abelii</name>
    <dbReference type="NCBI Taxonomy" id="9601"/>
    <lineage>
        <taxon>Eukaryota</taxon>
        <taxon>Metazoa</taxon>
        <taxon>Chordata</taxon>
        <taxon>Craniata</taxon>
        <taxon>Vertebrata</taxon>
        <taxon>Euteleostomi</taxon>
        <taxon>Mammalia</taxon>
        <taxon>Eutheria</taxon>
        <taxon>Euarchontoglires</taxon>
        <taxon>Primates</taxon>
        <taxon>Haplorrhini</taxon>
        <taxon>Catarrhini</taxon>
        <taxon>Hominidae</taxon>
        <taxon>Pongo</taxon>
    </lineage>
</organism>
<keyword id="KW-1003">Cell membrane</keyword>
<keyword id="KW-0472">Membrane</keyword>
<keyword id="KW-0597">Phosphoprotein</keyword>
<keyword id="KW-1185">Reference proteome</keyword>
<keyword id="KW-0677">Repeat</keyword>
<gene>
    <name type="primary">PDZK1</name>
    <name type="synonym">NHERF3</name>
</gene>
<reference key="1">
    <citation type="submission" date="2004-11" db="EMBL/GenBank/DDBJ databases">
        <authorList>
            <consortium name="The German cDNA consortium"/>
        </authorList>
    </citation>
    <scope>NUCLEOTIDE SEQUENCE [LARGE SCALE MRNA]</scope>
    <source>
        <tissue>Kidney</tissue>
    </source>
</reference>